<protein>
    <recommendedName>
        <fullName evidence="1">UDP-3-O-acylglucosamine N-acyltransferase</fullName>
        <ecNumber evidence="1">2.3.1.191</ecNumber>
    </recommendedName>
</protein>
<proteinExistence type="inferred from homology"/>
<gene>
    <name evidence="1" type="primary">lpxD</name>
    <name type="ordered locus">Rfer_1998</name>
</gene>
<feature type="chain" id="PRO_0000264423" description="UDP-3-O-acylglucosamine N-acyltransferase">
    <location>
        <begin position="1"/>
        <end position="329"/>
    </location>
</feature>
<feature type="active site" description="Proton acceptor" evidence="1">
    <location>
        <position position="224"/>
    </location>
</feature>
<name>LPXD_ALBFT</name>
<sequence>MTLLLGSIVELLGGDLQGDASLKIEGLAPLESATPQQLSFLSHPKYQNQLAASRAACVIVSPEMRGVALARGACIVTEQPYLYFARVTQLWKKSLPRTVRPQIHPSAVIDPEAFVHPRACIGALCVIESGASVGADTVLKSRVTVGENCVIGERCLLHSGVVIGADGFGFAPHAGAWEKIEQLGAVRIGNDVEIGANTCIDRGALQDTVIEDGVKLDNLIQIGHNVHVGKHTAMAGCAGVAGSATIGAHCTLGGGAIVLGHLTLADGVNISAATVVTRSLRKPGHYTGMFPIDDNAAWEKNAASLKQLHSLRDRIRALEDKLMTLRDRP</sequence>
<comment type="function">
    <text evidence="1">Catalyzes the N-acylation of UDP-3-O-acylglucosamine using 3-hydroxyacyl-ACP as the acyl donor. Is involved in the biosynthesis of lipid A, a phosphorylated glycolipid that anchors the lipopolysaccharide to the outer membrane of the cell.</text>
</comment>
<comment type="catalytic activity">
    <reaction evidence="1">
        <text>a UDP-3-O-[(3R)-3-hydroxyacyl]-alpha-D-glucosamine + a (3R)-hydroxyacyl-[ACP] = a UDP-2-N,3-O-bis[(3R)-3-hydroxyacyl]-alpha-D-glucosamine + holo-[ACP] + H(+)</text>
        <dbReference type="Rhea" id="RHEA:53836"/>
        <dbReference type="Rhea" id="RHEA-COMP:9685"/>
        <dbReference type="Rhea" id="RHEA-COMP:9945"/>
        <dbReference type="ChEBI" id="CHEBI:15378"/>
        <dbReference type="ChEBI" id="CHEBI:64479"/>
        <dbReference type="ChEBI" id="CHEBI:78827"/>
        <dbReference type="ChEBI" id="CHEBI:137740"/>
        <dbReference type="ChEBI" id="CHEBI:137748"/>
        <dbReference type="EC" id="2.3.1.191"/>
    </reaction>
</comment>
<comment type="pathway">
    <text evidence="1">Bacterial outer membrane biogenesis; LPS lipid A biosynthesis.</text>
</comment>
<comment type="subunit">
    <text evidence="1">Homotrimer.</text>
</comment>
<comment type="similarity">
    <text evidence="1">Belongs to the transferase hexapeptide repeat family. LpxD subfamily.</text>
</comment>
<keyword id="KW-0012">Acyltransferase</keyword>
<keyword id="KW-0441">Lipid A biosynthesis</keyword>
<keyword id="KW-0444">Lipid biosynthesis</keyword>
<keyword id="KW-0443">Lipid metabolism</keyword>
<keyword id="KW-1185">Reference proteome</keyword>
<keyword id="KW-0677">Repeat</keyword>
<keyword id="KW-0808">Transferase</keyword>
<accession>Q21WY0</accession>
<dbReference type="EC" id="2.3.1.191" evidence="1"/>
<dbReference type="EMBL" id="CP000267">
    <property type="protein sequence ID" value="ABD69723.1"/>
    <property type="molecule type" value="Genomic_DNA"/>
</dbReference>
<dbReference type="RefSeq" id="WP_011464291.1">
    <property type="nucleotide sequence ID" value="NC_007908.1"/>
</dbReference>
<dbReference type="SMR" id="Q21WY0"/>
<dbReference type="STRING" id="338969.Rfer_1998"/>
<dbReference type="KEGG" id="rfr:Rfer_1998"/>
<dbReference type="eggNOG" id="COG1044">
    <property type="taxonomic scope" value="Bacteria"/>
</dbReference>
<dbReference type="HOGENOM" id="CLU_049865_0_1_4"/>
<dbReference type="OrthoDB" id="9784739at2"/>
<dbReference type="UniPathway" id="UPA00973"/>
<dbReference type="Proteomes" id="UP000008332">
    <property type="component" value="Chromosome"/>
</dbReference>
<dbReference type="GO" id="GO:0016020">
    <property type="term" value="C:membrane"/>
    <property type="evidence" value="ECO:0007669"/>
    <property type="project" value="GOC"/>
</dbReference>
<dbReference type="GO" id="GO:0016410">
    <property type="term" value="F:N-acyltransferase activity"/>
    <property type="evidence" value="ECO:0007669"/>
    <property type="project" value="InterPro"/>
</dbReference>
<dbReference type="GO" id="GO:0009245">
    <property type="term" value="P:lipid A biosynthetic process"/>
    <property type="evidence" value="ECO:0007669"/>
    <property type="project" value="UniProtKB-UniRule"/>
</dbReference>
<dbReference type="CDD" id="cd03352">
    <property type="entry name" value="LbH_LpxD"/>
    <property type="match status" value="1"/>
</dbReference>
<dbReference type="Gene3D" id="2.160.10.10">
    <property type="entry name" value="Hexapeptide repeat proteins"/>
    <property type="match status" value="1"/>
</dbReference>
<dbReference type="Gene3D" id="3.40.1390.10">
    <property type="entry name" value="MurE/MurF, N-terminal domain"/>
    <property type="match status" value="1"/>
</dbReference>
<dbReference type="HAMAP" id="MF_00523">
    <property type="entry name" value="LpxD"/>
    <property type="match status" value="1"/>
</dbReference>
<dbReference type="InterPro" id="IPR001451">
    <property type="entry name" value="Hexapep"/>
</dbReference>
<dbReference type="InterPro" id="IPR007691">
    <property type="entry name" value="LpxD"/>
</dbReference>
<dbReference type="InterPro" id="IPR011004">
    <property type="entry name" value="Trimer_LpxA-like_sf"/>
</dbReference>
<dbReference type="InterPro" id="IPR020573">
    <property type="entry name" value="UDP_GlcNAc_AcTrfase_non-rep"/>
</dbReference>
<dbReference type="NCBIfam" id="TIGR01853">
    <property type="entry name" value="lipid_A_lpxD"/>
    <property type="match status" value="1"/>
</dbReference>
<dbReference type="NCBIfam" id="NF002060">
    <property type="entry name" value="PRK00892.1"/>
    <property type="match status" value="1"/>
</dbReference>
<dbReference type="PANTHER" id="PTHR43378">
    <property type="entry name" value="UDP-3-O-ACYLGLUCOSAMINE N-ACYLTRANSFERASE"/>
    <property type="match status" value="1"/>
</dbReference>
<dbReference type="PANTHER" id="PTHR43378:SF2">
    <property type="entry name" value="UDP-3-O-ACYLGLUCOSAMINE N-ACYLTRANSFERASE 1, MITOCHONDRIAL-RELATED"/>
    <property type="match status" value="1"/>
</dbReference>
<dbReference type="Pfam" id="PF00132">
    <property type="entry name" value="Hexapep"/>
    <property type="match status" value="1"/>
</dbReference>
<dbReference type="Pfam" id="PF04613">
    <property type="entry name" value="LpxD"/>
    <property type="match status" value="1"/>
</dbReference>
<dbReference type="SUPFAM" id="SSF51161">
    <property type="entry name" value="Trimeric LpxA-like enzymes"/>
    <property type="match status" value="1"/>
</dbReference>
<organism>
    <name type="scientific">Albidiferax ferrireducens (strain ATCC BAA-621 / DSM 15236 / T118)</name>
    <name type="common">Rhodoferax ferrireducens</name>
    <dbReference type="NCBI Taxonomy" id="338969"/>
    <lineage>
        <taxon>Bacteria</taxon>
        <taxon>Pseudomonadati</taxon>
        <taxon>Pseudomonadota</taxon>
        <taxon>Betaproteobacteria</taxon>
        <taxon>Burkholderiales</taxon>
        <taxon>Comamonadaceae</taxon>
        <taxon>Rhodoferax</taxon>
    </lineage>
</organism>
<reference key="1">
    <citation type="submission" date="2006-02" db="EMBL/GenBank/DDBJ databases">
        <title>Complete sequence of chromosome of Rhodoferax ferrireducens DSM 15236.</title>
        <authorList>
            <person name="Copeland A."/>
            <person name="Lucas S."/>
            <person name="Lapidus A."/>
            <person name="Barry K."/>
            <person name="Detter J.C."/>
            <person name="Glavina del Rio T."/>
            <person name="Hammon N."/>
            <person name="Israni S."/>
            <person name="Pitluck S."/>
            <person name="Brettin T."/>
            <person name="Bruce D."/>
            <person name="Han C."/>
            <person name="Tapia R."/>
            <person name="Gilna P."/>
            <person name="Kiss H."/>
            <person name="Schmutz J."/>
            <person name="Larimer F."/>
            <person name="Land M."/>
            <person name="Kyrpides N."/>
            <person name="Ivanova N."/>
            <person name="Richardson P."/>
        </authorList>
    </citation>
    <scope>NUCLEOTIDE SEQUENCE [LARGE SCALE GENOMIC DNA]</scope>
    <source>
        <strain>ATCC BAA-621 / DSM 15236 / T118</strain>
    </source>
</reference>
<evidence type="ECO:0000255" key="1">
    <source>
        <dbReference type="HAMAP-Rule" id="MF_00523"/>
    </source>
</evidence>